<comment type="function">
    <text evidence="1">One of the primary rRNA binding proteins, it binds specifically to the 5'-end of 16S ribosomal RNA.</text>
</comment>
<comment type="subunit">
    <text evidence="1">Part of the 30S ribosomal subunit.</text>
</comment>
<comment type="similarity">
    <text evidence="1">Belongs to the universal ribosomal protein uS17 family.</text>
</comment>
<organism>
    <name type="scientific">Aeropyrum pernix (strain ATCC 700893 / DSM 11879 / JCM 9820 / NBRC 100138 / K1)</name>
    <dbReference type="NCBI Taxonomy" id="272557"/>
    <lineage>
        <taxon>Archaea</taxon>
        <taxon>Thermoproteota</taxon>
        <taxon>Thermoprotei</taxon>
        <taxon>Desulfurococcales</taxon>
        <taxon>Desulfurococcaceae</taxon>
        <taxon>Aeropyrum</taxon>
    </lineage>
</organism>
<evidence type="ECO:0000255" key="1">
    <source>
        <dbReference type="HAMAP-Rule" id="MF_01345"/>
    </source>
</evidence>
<evidence type="ECO:0000305" key="2"/>
<protein>
    <recommendedName>
        <fullName evidence="1">Small ribosomal subunit protein uS17</fullName>
    </recommendedName>
    <alternativeName>
        <fullName evidence="2">30S ribosomal protein S17</fullName>
    </alternativeName>
</protein>
<name>RS17_AERPE</name>
<gene>
    <name evidence="1" type="primary">rps17</name>
    <name type="ordered locus">APE_0360.1</name>
</gene>
<sequence length="114" mass="13112">MPKFKQVKNLKIPGVEPPEKVCSDPNCPWHGTLRVRGVLLEGVVAKARARRMVVVQHVYLYYDKKYNRYERRSKKIHAHLPDCISVKEGDVVVIGETMPISKTVKFTVLGVKRR</sequence>
<dbReference type="EMBL" id="BA000002">
    <property type="protein sequence ID" value="BAA79315.2"/>
    <property type="molecule type" value="Genomic_DNA"/>
</dbReference>
<dbReference type="PIR" id="G72727">
    <property type="entry name" value="G72727"/>
</dbReference>
<dbReference type="RefSeq" id="WP_010865691.1">
    <property type="nucleotide sequence ID" value="NC_000854.2"/>
</dbReference>
<dbReference type="SMR" id="Q9YF81"/>
<dbReference type="STRING" id="272557.APE_0360.1"/>
<dbReference type="EnsemblBacteria" id="BAA79315">
    <property type="protein sequence ID" value="BAA79315"/>
    <property type="gene ID" value="APE_0360.1"/>
</dbReference>
<dbReference type="GeneID" id="1444574"/>
<dbReference type="KEGG" id="ape:APE_0360.1"/>
<dbReference type="eggNOG" id="arCOG04096">
    <property type="taxonomic scope" value="Archaea"/>
</dbReference>
<dbReference type="Proteomes" id="UP000002518">
    <property type="component" value="Chromosome"/>
</dbReference>
<dbReference type="GO" id="GO:0022627">
    <property type="term" value="C:cytosolic small ribosomal subunit"/>
    <property type="evidence" value="ECO:0007669"/>
    <property type="project" value="TreeGrafter"/>
</dbReference>
<dbReference type="GO" id="GO:0019843">
    <property type="term" value="F:rRNA binding"/>
    <property type="evidence" value="ECO:0007669"/>
    <property type="project" value="UniProtKB-UniRule"/>
</dbReference>
<dbReference type="GO" id="GO:0003735">
    <property type="term" value="F:structural constituent of ribosome"/>
    <property type="evidence" value="ECO:0007669"/>
    <property type="project" value="InterPro"/>
</dbReference>
<dbReference type="GO" id="GO:0006412">
    <property type="term" value="P:translation"/>
    <property type="evidence" value="ECO:0007669"/>
    <property type="project" value="UniProtKB-UniRule"/>
</dbReference>
<dbReference type="CDD" id="cd00364">
    <property type="entry name" value="Ribosomal_uS17"/>
    <property type="match status" value="1"/>
</dbReference>
<dbReference type="Gene3D" id="2.40.50.1000">
    <property type="match status" value="1"/>
</dbReference>
<dbReference type="HAMAP" id="MF_01345_A">
    <property type="entry name" value="Ribosomal_uS17_A"/>
    <property type="match status" value="1"/>
</dbReference>
<dbReference type="InterPro" id="IPR012340">
    <property type="entry name" value="NA-bd_OB-fold"/>
</dbReference>
<dbReference type="InterPro" id="IPR000266">
    <property type="entry name" value="Ribosomal_uS17"/>
</dbReference>
<dbReference type="InterPro" id="IPR028333">
    <property type="entry name" value="Ribosomal_uS17_arc/euk"/>
</dbReference>
<dbReference type="InterPro" id="IPR019978">
    <property type="entry name" value="Ribosomal_uS17_archaeal"/>
</dbReference>
<dbReference type="NCBIfam" id="NF006345">
    <property type="entry name" value="PRK08572.1"/>
    <property type="match status" value="1"/>
</dbReference>
<dbReference type="NCBIfam" id="TIGR03630">
    <property type="entry name" value="uS17_arch"/>
    <property type="match status" value="1"/>
</dbReference>
<dbReference type="PANTHER" id="PTHR10744">
    <property type="entry name" value="40S RIBOSOMAL PROTEIN S11 FAMILY MEMBER"/>
    <property type="match status" value="1"/>
</dbReference>
<dbReference type="PANTHER" id="PTHR10744:SF9">
    <property type="entry name" value="40S RIBOSOMAL PROTEIN S11-RELATED"/>
    <property type="match status" value="1"/>
</dbReference>
<dbReference type="Pfam" id="PF00366">
    <property type="entry name" value="Ribosomal_S17"/>
    <property type="match status" value="1"/>
</dbReference>
<dbReference type="PRINTS" id="PR00973">
    <property type="entry name" value="RIBOSOMALS17"/>
</dbReference>
<dbReference type="SUPFAM" id="SSF50249">
    <property type="entry name" value="Nucleic acid-binding proteins"/>
    <property type="match status" value="1"/>
</dbReference>
<keyword id="KW-1185">Reference proteome</keyword>
<keyword id="KW-0687">Ribonucleoprotein</keyword>
<keyword id="KW-0689">Ribosomal protein</keyword>
<keyword id="KW-0694">RNA-binding</keyword>
<keyword id="KW-0699">rRNA-binding</keyword>
<reference key="1">
    <citation type="journal article" date="1999" name="DNA Res.">
        <title>Complete genome sequence of an aerobic hyper-thermophilic crenarchaeon, Aeropyrum pernix K1.</title>
        <authorList>
            <person name="Kawarabayasi Y."/>
            <person name="Hino Y."/>
            <person name="Horikawa H."/>
            <person name="Yamazaki S."/>
            <person name="Haikawa Y."/>
            <person name="Jin-no K."/>
            <person name="Takahashi M."/>
            <person name="Sekine M."/>
            <person name="Baba S."/>
            <person name="Ankai A."/>
            <person name="Kosugi H."/>
            <person name="Hosoyama A."/>
            <person name="Fukui S."/>
            <person name="Nagai Y."/>
            <person name="Nishijima K."/>
            <person name="Nakazawa H."/>
            <person name="Takamiya M."/>
            <person name="Masuda S."/>
            <person name="Funahashi T."/>
            <person name="Tanaka T."/>
            <person name="Kudoh Y."/>
            <person name="Yamazaki J."/>
            <person name="Kushida N."/>
            <person name="Oguchi A."/>
            <person name="Aoki K."/>
            <person name="Kubota K."/>
            <person name="Nakamura Y."/>
            <person name="Nomura N."/>
            <person name="Sako Y."/>
            <person name="Kikuchi H."/>
        </authorList>
    </citation>
    <scope>NUCLEOTIDE SEQUENCE [LARGE SCALE GENOMIC DNA]</scope>
    <source>
        <strain>ATCC 700893 / DSM 11879 / JCM 9820 / NBRC 100138 / K1</strain>
    </source>
</reference>
<feature type="chain" id="PRO_0000128495" description="Small ribosomal subunit protein uS17">
    <location>
        <begin position="1"/>
        <end position="114"/>
    </location>
</feature>
<accession>Q9YF81</accession>
<proteinExistence type="inferred from homology"/>